<organism>
    <name type="scientific">Aethionema grandiflorum</name>
    <name type="common">Persian stone-cress</name>
    <dbReference type="NCBI Taxonomy" id="72657"/>
    <lineage>
        <taxon>Eukaryota</taxon>
        <taxon>Viridiplantae</taxon>
        <taxon>Streptophyta</taxon>
        <taxon>Embryophyta</taxon>
        <taxon>Tracheophyta</taxon>
        <taxon>Spermatophyta</taxon>
        <taxon>Magnoliopsida</taxon>
        <taxon>eudicotyledons</taxon>
        <taxon>Gunneridae</taxon>
        <taxon>Pentapetalae</taxon>
        <taxon>rosids</taxon>
        <taxon>malvids</taxon>
        <taxon>Brassicales</taxon>
        <taxon>Brassicaceae</taxon>
        <taxon>Aethionemeae</taxon>
        <taxon>Aethionema</taxon>
    </lineage>
</organism>
<dbReference type="EMBL" id="AP009367">
    <property type="protein sequence ID" value="BAF49868.1"/>
    <property type="molecule type" value="Genomic_DNA"/>
</dbReference>
<dbReference type="RefSeq" id="YP_001123044.1">
    <property type="nucleotide sequence ID" value="NC_009266.1"/>
</dbReference>
<dbReference type="SMR" id="A4QJL3"/>
<dbReference type="GeneID" id="4962312"/>
<dbReference type="GO" id="GO:0009535">
    <property type="term" value="C:chloroplast thylakoid membrane"/>
    <property type="evidence" value="ECO:0007669"/>
    <property type="project" value="UniProtKB-SubCell"/>
</dbReference>
<dbReference type="GO" id="GO:0009539">
    <property type="term" value="C:photosystem II reaction center"/>
    <property type="evidence" value="ECO:0007669"/>
    <property type="project" value="InterPro"/>
</dbReference>
<dbReference type="GO" id="GO:0015979">
    <property type="term" value="P:photosynthesis"/>
    <property type="evidence" value="ECO:0007669"/>
    <property type="project" value="UniProtKB-UniRule"/>
</dbReference>
<dbReference type="Gene3D" id="6.10.250.2070">
    <property type="match status" value="1"/>
</dbReference>
<dbReference type="HAMAP" id="MF_01305">
    <property type="entry name" value="PSII_PsbJ"/>
    <property type="match status" value="1"/>
</dbReference>
<dbReference type="InterPro" id="IPR002682">
    <property type="entry name" value="PSII_PsbJ"/>
</dbReference>
<dbReference type="InterPro" id="IPR037267">
    <property type="entry name" value="PSII_PsbJ_sf"/>
</dbReference>
<dbReference type="NCBIfam" id="NF002722">
    <property type="entry name" value="PRK02565.1"/>
    <property type="match status" value="1"/>
</dbReference>
<dbReference type="PANTHER" id="PTHR34812">
    <property type="entry name" value="PHOTOSYSTEM II REACTION CENTER PROTEIN J"/>
    <property type="match status" value="1"/>
</dbReference>
<dbReference type="PANTHER" id="PTHR34812:SF3">
    <property type="entry name" value="PHOTOSYSTEM II REACTION CENTER PROTEIN J"/>
    <property type="match status" value="1"/>
</dbReference>
<dbReference type="Pfam" id="PF01788">
    <property type="entry name" value="PsbJ"/>
    <property type="match status" value="1"/>
</dbReference>
<dbReference type="SUPFAM" id="SSF161021">
    <property type="entry name" value="Photosystem II reaction center protein J, PsbJ"/>
    <property type="match status" value="1"/>
</dbReference>
<accession>A4QJL3</accession>
<protein>
    <recommendedName>
        <fullName evidence="1">Photosystem II reaction center protein J</fullName>
        <shortName evidence="1">PSII-J</shortName>
    </recommendedName>
</protein>
<comment type="function">
    <text evidence="1">One of the components of the core complex of photosystem II (PSII). PSII is a light-driven water:plastoquinone oxidoreductase that uses light energy to abstract electrons from H(2)O, generating O(2) and a proton gradient subsequently used for ATP formation. It consists of a core antenna complex that captures photons, and an electron transfer chain that converts photonic excitation into a charge separation.</text>
</comment>
<comment type="subunit">
    <text evidence="1">PSII is composed of 1 copy each of membrane proteins PsbA, PsbB, PsbC, PsbD, PsbE, PsbF, PsbH, PsbI, PsbJ, PsbK, PsbL, PsbM, PsbT, PsbX, PsbY, PsbZ, Psb30/Ycf12, at least 3 peripheral proteins of the oxygen-evolving complex and a large number of cofactors. It forms dimeric complexes.</text>
</comment>
<comment type="subcellular location">
    <subcellularLocation>
        <location evidence="1">Plastid</location>
        <location evidence="1">Chloroplast thylakoid membrane</location>
        <topology evidence="1">Single-pass membrane protein</topology>
    </subcellularLocation>
</comment>
<comment type="similarity">
    <text evidence="1">Belongs to the PsbJ family.</text>
</comment>
<feature type="chain" id="PRO_0000292245" description="Photosystem II reaction center protein J">
    <location>
        <begin position="1"/>
        <end position="40"/>
    </location>
</feature>
<feature type="transmembrane region" description="Helical" evidence="1">
    <location>
        <begin position="8"/>
        <end position="28"/>
    </location>
</feature>
<sequence>MADTTGRIPLWIIGTGAGILVIGLIGIFFYGSYSGLGSSL</sequence>
<reference key="1">
    <citation type="submission" date="2007-03" db="EMBL/GenBank/DDBJ databases">
        <title>Sequencing analysis of Aethionema grandiflorum chloroplast DNA.</title>
        <authorList>
            <person name="Hosouchi T."/>
            <person name="Tsuruoka H."/>
            <person name="Kotani H."/>
        </authorList>
    </citation>
    <scope>NUCLEOTIDE SEQUENCE [LARGE SCALE GENOMIC DNA]</scope>
</reference>
<geneLocation type="chloroplast"/>
<gene>
    <name evidence="1" type="primary">psbJ</name>
</gene>
<proteinExistence type="inferred from homology"/>
<name>PSBJ_AETGR</name>
<keyword id="KW-0150">Chloroplast</keyword>
<keyword id="KW-0472">Membrane</keyword>
<keyword id="KW-0602">Photosynthesis</keyword>
<keyword id="KW-0604">Photosystem II</keyword>
<keyword id="KW-0934">Plastid</keyword>
<keyword id="KW-0674">Reaction center</keyword>
<keyword id="KW-0793">Thylakoid</keyword>
<keyword id="KW-0812">Transmembrane</keyword>
<keyword id="KW-1133">Transmembrane helix</keyword>
<evidence type="ECO:0000255" key="1">
    <source>
        <dbReference type="HAMAP-Rule" id="MF_01305"/>
    </source>
</evidence>